<reference key="1">
    <citation type="journal article" date="2006" name="Appl. Environ. Microbiol.">
        <title>Genome sequence of the chemolithoautotrophic nitrite-oxidizing bacterium Nitrobacter winogradskyi Nb-255.</title>
        <authorList>
            <person name="Starkenburg S.R."/>
            <person name="Chain P.S.G."/>
            <person name="Sayavedra-Soto L.A."/>
            <person name="Hauser L."/>
            <person name="Land M.L."/>
            <person name="Larimer F.W."/>
            <person name="Malfatti S.A."/>
            <person name="Klotz M.G."/>
            <person name="Bottomley P.J."/>
            <person name="Arp D.J."/>
            <person name="Hickey W.J."/>
        </authorList>
    </citation>
    <scope>NUCLEOTIDE SEQUENCE [LARGE SCALE GENOMIC DNA]</scope>
    <source>
        <strain>ATCC 25391 / DSM 10237 / CIP 104748 / NCIMB 11846 / Nb-255</strain>
    </source>
</reference>
<dbReference type="EC" id="2.7.1.71" evidence="1"/>
<dbReference type="EMBL" id="CP000115">
    <property type="protein sequence ID" value="ABA03662.1"/>
    <property type="molecule type" value="Genomic_DNA"/>
</dbReference>
<dbReference type="RefSeq" id="WP_011313726.1">
    <property type="nucleotide sequence ID" value="NC_007406.1"/>
</dbReference>
<dbReference type="SMR" id="Q3SVM9"/>
<dbReference type="STRING" id="323098.Nwi_0395"/>
<dbReference type="KEGG" id="nwi:Nwi_0395"/>
<dbReference type="eggNOG" id="COG0703">
    <property type="taxonomic scope" value="Bacteria"/>
</dbReference>
<dbReference type="HOGENOM" id="CLU_057607_2_0_5"/>
<dbReference type="OrthoDB" id="9800332at2"/>
<dbReference type="UniPathway" id="UPA00053">
    <property type="reaction ID" value="UER00088"/>
</dbReference>
<dbReference type="Proteomes" id="UP000002531">
    <property type="component" value="Chromosome"/>
</dbReference>
<dbReference type="GO" id="GO:0005829">
    <property type="term" value="C:cytosol"/>
    <property type="evidence" value="ECO:0007669"/>
    <property type="project" value="TreeGrafter"/>
</dbReference>
<dbReference type="GO" id="GO:0005524">
    <property type="term" value="F:ATP binding"/>
    <property type="evidence" value="ECO:0007669"/>
    <property type="project" value="UniProtKB-UniRule"/>
</dbReference>
<dbReference type="GO" id="GO:0000287">
    <property type="term" value="F:magnesium ion binding"/>
    <property type="evidence" value="ECO:0007669"/>
    <property type="project" value="UniProtKB-UniRule"/>
</dbReference>
<dbReference type="GO" id="GO:0004765">
    <property type="term" value="F:shikimate kinase activity"/>
    <property type="evidence" value="ECO:0007669"/>
    <property type="project" value="UniProtKB-UniRule"/>
</dbReference>
<dbReference type="GO" id="GO:0008652">
    <property type="term" value="P:amino acid biosynthetic process"/>
    <property type="evidence" value="ECO:0007669"/>
    <property type="project" value="UniProtKB-KW"/>
</dbReference>
<dbReference type="GO" id="GO:0009073">
    <property type="term" value="P:aromatic amino acid family biosynthetic process"/>
    <property type="evidence" value="ECO:0007669"/>
    <property type="project" value="UniProtKB-KW"/>
</dbReference>
<dbReference type="GO" id="GO:0009423">
    <property type="term" value="P:chorismate biosynthetic process"/>
    <property type="evidence" value="ECO:0007669"/>
    <property type="project" value="UniProtKB-UniRule"/>
</dbReference>
<dbReference type="CDD" id="cd00464">
    <property type="entry name" value="SK"/>
    <property type="match status" value="1"/>
</dbReference>
<dbReference type="Gene3D" id="3.40.50.300">
    <property type="entry name" value="P-loop containing nucleotide triphosphate hydrolases"/>
    <property type="match status" value="1"/>
</dbReference>
<dbReference type="HAMAP" id="MF_00109">
    <property type="entry name" value="Shikimate_kinase"/>
    <property type="match status" value="1"/>
</dbReference>
<dbReference type="InterPro" id="IPR027417">
    <property type="entry name" value="P-loop_NTPase"/>
</dbReference>
<dbReference type="InterPro" id="IPR031322">
    <property type="entry name" value="Shikimate/glucono_kinase"/>
</dbReference>
<dbReference type="InterPro" id="IPR000623">
    <property type="entry name" value="Shikimate_kinase/TSH1"/>
</dbReference>
<dbReference type="InterPro" id="IPR023000">
    <property type="entry name" value="Shikimate_kinase_CS"/>
</dbReference>
<dbReference type="NCBIfam" id="NF010552">
    <property type="entry name" value="PRK13946.1"/>
    <property type="match status" value="1"/>
</dbReference>
<dbReference type="PANTHER" id="PTHR21087">
    <property type="entry name" value="SHIKIMATE KINASE"/>
    <property type="match status" value="1"/>
</dbReference>
<dbReference type="PANTHER" id="PTHR21087:SF16">
    <property type="entry name" value="SHIKIMATE KINASE 1, CHLOROPLASTIC"/>
    <property type="match status" value="1"/>
</dbReference>
<dbReference type="Pfam" id="PF01202">
    <property type="entry name" value="SKI"/>
    <property type="match status" value="1"/>
</dbReference>
<dbReference type="PRINTS" id="PR01100">
    <property type="entry name" value="SHIKIMTKNASE"/>
</dbReference>
<dbReference type="SUPFAM" id="SSF52540">
    <property type="entry name" value="P-loop containing nucleoside triphosphate hydrolases"/>
    <property type="match status" value="1"/>
</dbReference>
<dbReference type="PROSITE" id="PS01128">
    <property type="entry name" value="SHIKIMATE_KINASE"/>
    <property type="match status" value="1"/>
</dbReference>
<protein>
    <recommendedName>
        <fullName evidence="1">Shikimate kinase</fullName>
        <shortName evidence="1">SK</shortName>
        <ecNumber evidence="1">2.7.1.71</ecNumber>
    </recommendedName>
</protein>
<keyword id="KW-0028">Amino-acid biosynthesis</keyword>
<keyword id="KW-0057">Aromatic amino acid biosynthesis</keyword>
<keyword id="KW-0067">ATP-binding</keyword>
<keyword id="KW-0963">Cytoplasm</keyword>
<keyword id="KW-0418">Kinase</keyword>
<keyword id="KW-0460">Magnesium</keyword>
<keyword id="KW-0479">Metal-binding</keyword>
<keyword id="KW-0547">Nucleotide-binding</keyword>
<keyword id="KW-1185">Reference proteome</keyword>
<keyword id="KW-0808">Transferase</keyword>
<organism>
    <name type="scientific">Nitrobacter winogradskyi (strain ATCC 25391 / DSM 10237 / CIP 104748 / NCIMB 11846 / Nb-255)</name>
    <dbReference type="NCBI Taxonomy" id="323098"/>
    <lineage>
        <taxon>Bacteria</taxon>
        <taxon>Pseudomonadati</taxon>
        <taxon>Pseudomonadota</taxon>
        <taxon>Alphaproteobacteria</taxon>
        <taxon>Hyphomicrobiales</taxon>
        <taxon>Nitrobacteraceae</taxon>
        <taxon>Nitrobacter</taxon>
    </lineage>
</organism>
<sequence length="214" mass="23443">MTSETVSPSSFGASPETAVVAALAGRSLALVGMMGAGKSTIGRRLAARLRMRFVDADAEIELAAGMPIPEIFETHGEPHFRDGEARVIARLLNGGPIVLATGGGAVLREETRARLSERAVSIWLKADAEVILRRVRRRADRPLLQTADPAATIKRLIAEREPIYRQADITVASRDVPYEWIVDECIGLLHRRLCRGEMTRNAMKDPDEGFDTTQ</sequence>
<gene>
    <name evidence="1" type="primary">aroK</name>
    <name type="ordered locus">Nwi_0395</name>
</gene>
<name>AROK_NITWN</name>
<proteinExistence type="inferred from homology"/>
<accession>Q3SVM9</accession>
<feature type="chain" id="PRO_0000237898" description="Shikimate kinase">
    <location>
        <begin position="1"/>
        <end position="214"/>
    </location>
</feature>
<feature type="binding site" evidence="1">
    <location>
        <begin position="35"/>
        <end position="40"/>
    </location>
    <ligand>
        <name>ATP</name>
        <dbReference type="ChEBI" id="CHEBI:30616"/>
    </ligand>
</feature>
<feature type="binding site" evidence="1">
    <location>
        <position position="39"/>
    </location>
    <ligand>
        <name>Mg(2+)</name>
        <dbReference type="ChEBI" id="CHEBI:18420"/>
    </ligand>
</feature>
<feature type="binding site" evidence="1">
    <location>
        <position position="57"/>
    </location>
    <ligand>
        <name>substrate</name>
    </ligand>
</feature>
<feature type="binding site" evidence="1">
    <location>
        <position position="81"/>
    </location>
    <ligand>
        <name>substrate</name>
    </ligand>
</feature>
<feature type="binding site" evidence="1">
    <location>
        <position position="103"/>
    </location>
    <ligand>
        <name>substrate</name>
    </ligand>
</feature>
<feature type="binding site" evidence="1">
    <location>
        <position position="141"/>
    </location>
    <ligand>
        <name>ATP</name>
        <dbReference type="ChEBI" id="CHEBI:30616"/>
    </ligand>
</feature>
<feature type="binding site" evidence="1">
    <location>
        <position position="160"/>
    </location>
    <ligand>
        <name>substrate</name>
    </ligand>
</feature>
<evidence type="ECO:0000255" key="1">
    <source>
        <dbReference type="HAMAP-Rule" id="MF_00109"/>
    </source>
</evidence>
<comment type="function">
    <text evidence="1">Catalyzes the specific phosphorylation of the 3-hydroxyl group of shikimic acid using ATP as a cosubstrate.</text>
</comment>
<comment type="catalytic activity">
    <reaction evidence="1">
        <text>shikimate + ATP = 3-phosphoshikimate + ADP + H(+)</text>
        <dbReference type="Rhea" id="RHEA:13121"/>
        <dbReference type="ChEBI" id="CHEBI:15378"/>
        <dbReference type="ChEBI" id="CHEBI:30616"/>
        <dbReference type="ChEBI" id="CHEBI:36208"/>
        <dbReference type="ChEBI" id="CHEBI:145989"/>
        <dbReference type="ChEBI" id="CHEBI:456216"/>
        <dbReference type="EC" id="2.7.1.71"/>
    </reaction>
</comment>
<comment type="cofactor">
    <cofactor evidence="1">
        <name>Mg(2+)</name>
        <dbReference type="ChEBI" id="CHEBI:18420"/>
    </cofactor>
    <text evidence="1">Binds 1 Mg(2+) ion per subunit.</text>
</comment>
<comment type="pathway">
    <text evidence="1">Metabolic intermediate biosynthesis; chorismate biosynthesis; chorismate from D-erythrose 4-phosphate and phosphoenolpyruvate: step 5/7.</text>
</comment>
<comment type="subunit">
    <text evidence="1">Monomer.</text>
</comment>
<comment type="subcellular location">
    <subcellularLocation>
        <location evidence="1">Cytoplasm</location>
    </subcellularLocation>
</comment>
<comment type="similarity">
    <text evidence="1">Belongs to the shikimate kinase family.</text>
</comment>